<gene>
    <name type="primary">pyrI</name>
</gene>
<protein>
    <recommendedName>
        <fullName>Aspartate carbamoyltransferase regulatory chain</fullName>
    </recommendedName>
</protein>
<sequence length="154" mass="17306">MTHDNKLQVEAIKCGTVIDHIPAQIGFKLLTLFKLTATDQRITIGLNLPSNELGRKDLIKIENTFLTEQQANQLAMYAPKATVNRIDNYEVVRKLTLSLPDHIDGVLTCPNGNCISRSEPVRSSFSVKSRGGEVHLKCRYCEKEFEHQVVLQAD</sequence>
<reference key="1">
    <citation type="journal article" date="1989" name="J. Biol. Chem.">
        <title>Comparison of the aspartate transcarbamoylases from Serratia marcescens and Escherichia coli.</title>
        <authorList>
            <person name="Beck D."/>
            <person name="Kedzie K.M."/>
            <person name="Wild J.R."/>
        </authorList>
    </citation>
    <scope>NUCLEOTIDE SEQUENCE [GENOMIC DNA]</scope>
</reference>
<accession>P19936</accession>
<dbReference type="EMBL" id="J05033">
    <property type="protein sequence ID" value="AAA26565.1"/>
    <property type="molecule type" value="Genomic_DNA"/>
</dbReference>
<dbReference type="PIR" id="C34396">
    <property type="entry name" value="DTSECM"/>
</dbReference>
<dbReference type="SMR" id="P19936"/>
<dbReference type="STRING" id="273526.SMDB11_4605"/>
<dbReference type="GO" id="GO:0009347">
    <property type="term" value="C:aspartate carbamoyltransferase complex"/>
    <property type="evidence" value="ECO:0007669"/>
    <property type="project" value="InterPro"/>
</dbReference>
<dbReference type="GO" id="GO:0046872">
    <property type="term" value="F:metal ion binding"/>
    <property type="evidence" value="ECO:0007669"/>
    <property type="project" value="UniProtKB-KW"/>
</dbReference>
<dbReference type="GO" id="GO:0006207">
    <property type="term" value="P:'de novo' pyrimidine nucleobase biosynthetic process"/>
    <property type="evidence" value="ECO:0007669"/>
    <property type="project" value="InterPro"/>
</dbReference>
<dbReference type="GO" id="GO:0006221">
    <property type="term" value="P:pyrimidine nucleotide biosynthetic process"/>
    <property type="evidence" value="ECO:0007669"/>
    <property type="project" value="UniProtKB-UniRule"/>
</dbReference>
<dbReference type="FunFam" id="3.30.70.140:FF:000001">
    <property type="entry name" value="Aspartate carbamoyltransferase regulatory chain"/>
    <property type="match status" value="1"/>
</dbReference>
<dbReference type="Gene3D" id="2.30.30.20">
    <property type="entry name" value="Aspartate carbamoyltransferase regulatory subunit, C-terminal domain"/>
    <property type="match status" value="1"/>
</dbReference>
<dbReference type="Gene3D" id="3.30.70.140">
    <property type="entry name" value="Aspartate carbamoyltransferase regulatory subunit, N-terminal domain"/>
    <property type="match status" value="1"/>
</dbReference>
<dbReference type="HAMAP" id="MF_00002">
    <property type="entry name" value="Asp_carb_tr_reg"/>
    <property type="match status" value="1"/>
</dbReference>
<dbReference type="InterPro" id="IPR020545">
    <property type="entry name" value="Asp_carbamoyltransf_reg_N"/>
</dbReference>
<dbReference type="InterPro" id="IPR002801">
    <property type="entry name" value="Asp_carbamoylTrfase_reg"/>
</dbReference>
<dbReference type="InterPro" id="IPR020542">
    <property type="entry name" value="Asp_carbamoyltrfase_reg_C"/>
</dbReference>
<dbReference type="InterPro" id="IPR036792">
    <property type="entry name" value="Asp_carbatrfase_reg_C_sf"/>
</dbReference>
<dbReference type="InterPro" id="IPR036793">
    <property type="entry name" value="Asp_carbatrfase_reg_N_sf"/>
</dbReference>
<dbReference type="NCBIfam" id="TIGR00240">
    <property type="entry name" value="ATCase_reg"/>
    <property type="match status" value="1"/>
</dbReference>
<dbReference type="PANTHER" id="PTHR35805">
    <property type="entry name" value="ASPARTATE CARBAMOYLTRANSFERASE REGULATORY CHAIN"/>
    <property type="match status" value="1"/>
</dbReference>
<dbReference type="PANTHER" id="PTHR35805:SF1">
    <property type="entry name" value="ASPARTATE CARBAMOYLTRANSFERASE REGULATORY CHAIN"/>
    <property type="match status" value="1"/>
</dbReference>
<dbReference type="Pfam" id="PF01948">
    <property type="entry name" value="PyrI"/>
    <property type="match status" value="1"/>
</dbReference>
<dbReference type="Pfam" id="PF02748">
    <property type="entry name" value="PyrI_C"/>
    <property type="match status" value="1"/>
</dbReference>
<dbReference type="SUPFAM" id="SSF57825">
    <property type="entry name" value="Aspartate carbamoyltransferase, Regulatory-chain, C-terminal domain"/>
    <property type="match status" value="1"/>
</dbReference>
<dbReference type="SUPFAM" id="SSF54893">
    <property type="entry name" value="Aspartate carbamoyltransferase, Regulatory-chain, N-terminal domain"/>
    <property type="match status" value="1"/>
</dbReference>
<keyword id="KW-0479">Metal-binding</keyword>
<keyword id="KW-0665">Pyrimidine biosynthesis</keyword>
<keyword id="KW-0862">Zinc</keyword>
<name>PYRI_SERMA</name>
<proteinExistence type="inferred from homology"/>
<feature type="initiator methionine" description="Removed" evidence="1">
    <location>
        <position position="1"/>
    </location>
</feature>
<feature type="chain" id="PRO_0000142315" description="Aspartate carbamoyltransferase regulatory chain">
    <location>
        <begin position="2"/>
        <end position="154"/>
    </location>
</feature>
<feature type="binding site" evidence="1">
    <location>
        <position position="109"/>
    </location>
    <ligand>
        <name>Zn(2+)</name>
        <dbReference type="ChEBI" id="CHEBI:29105"/>
    </ligand>
</feature>
<feature type="binding site" evidence="1">
    <location>
        <position position="114"/>
    </location>
    <ligand>
        <name>Zn(2+)</name>
        <dbReference type="ChEBI" id="CHEBI:29105"/>
    </ligand>
</feature>
<feature type="binding site" evidence="1">
    <location>
        <position position="138"/>
    </location>
    <ligand>
        <name>Zn(2+)</name>
        <dbReference type="ChEBI" id="CHEBI:29105"/>
    </ligand>
</feature>
<feature type="binding site" evidence="1">
    <location>
        <position position="141"/>
    </location>
    <ligand>
        <name>Zn(2+)</name>
        <dbReference type="ChEBI" id="CHEBI:29105"/>
    </ligand>
</feature>
<comment type="function">
    <text>Involved in allosteric regulation of aspartate carbamoyltransferase.</text>
</comment>
<comment type="cofactor">
    <cofactor>
        <name>Zn(2+)</name>
        <dbReference type="ChEBI" id="CHEBI:29105"/>
    </cofactor>
    <text>Binds 1 zinc ion per subunit.</text>
</comment>
<comment type="subunit">
    <text>Heterododecamer (2C3:3R2) of six catalytic PyrB chains organized as two trimers (C3), and six regulatory PyrI chains organized as three dimers (R2).</text>
</comment>
<comment type="similarity">
    <text evidence="2">Belongs to the PyrI family.</text>
</comment>
<evidence type="ECO:0000250" key="1"/>
<evidence type="ECO:0000305" key="2"/>
<organism>
    <name type="scientific">Serratia marcescens</name>
    <dbReference type="NCBI Taxonomy" id="615"/>
    <lineage>
        <taxon>Bacteria</taxon>
        <taxon>Pseudomonadati</taxon>
        <taxon>Pseudomonadota</taxon>
        <taxon>Gammaproteobacteria</taxon>
        <taxon>Enterobacterales</taxon>
        <taxon>Yersiniaceae</taxon>
        <taxon>Serratia</taxon>
    </lineage>
</organism>